<protein>
    <recommendedName>
        <fullName evidence="1">Aquaporin Z</fullName>
    </recommendedName>
</protein>
<proteinExistence type="inferred from homology"/>
<organism>
    <name type="scientific">Bordetella parapertussis (strain 12822 / ATCC BAA-587 / NCTC 13253)</name>
    <dbReference type="NCBI Taxonomy" id="257311"/>
    <lineage>
        <taxon>Bacteria</taxon>
        <taxon>Pseudomonadati</taxon>
        <taxon>Pseudomonadota</taxon>
        <taxon>Betaproteobacteria</taxon>
        <taxon>Burkholderiales</taxon>
        <taxon>Alcaligenaceae</taxon>
        <taxon>Bordetella</taxon>
    </lineage>
</organism>
<keyword id="KW-0997">Cell inner membrane</keyword>
<keyword id="KW-1003">Cell membrane</keyword>
<keyword id="KW-0472">Membrane</keyword>
<keyword id="KW-0677">Repeat</keyword>
<keyword id="KW-0812">Transmembrane</keyword>
<keyword id="KW-1133">Transmembrane helix</keyword>
<keyword id="KW-0813">Transport</keyword>
<dbReference type="EMBL" id="BX640429">
    <property type="protein sequence ID" value="CAE37257.1"/>
    <property type="molecule type" value="Genomic_DNA"/>
</dbReference>
<dbReference type="RefSeq" id="WP_003812617.1">
    <property type="nucleotide sequence ID" value="NC_002928.3"/>
</dbReference>
<dbReference type="SMR" id="Q7W917"/>
<dbReference type="GeneID" id="93203730"/>
<dbReference type="KEGG" id="bpa:BPP1958"/>
<dbReference type="HOGENOM" id="CLU_020019_3_2_4"/>
<dbReference type="Proteomes" id="UP000001421">
    <property type="component" value="Chromosome"/>
</dbReference>
<dbReference type="GO" id="GO:0005886">
    <property type="term" value="C:plasma membrane"/>
    <property type="evidence" value="ECO:0007669"/>
    <property type="project" value="UniProtKB-SubCell"/>
</dbReference>
<dbReference type="GO" id="GO:0015250">
    <property type="term" value="F:water channel activity"/>
    <property type="evidence" value="ECO:0007669"/>
    <property type="project" value="UniProtKB-UniRule"/>
</dbReference>
<dbReference type="CDD" id="cd00333">
    <property type="entry name" value="MIP"/>
    <property type="match status" value="1"/>
</dbReference>
<dbReference type="FunFam" id="1.20.1080.10:FF:000007">
    <property type="entry name" value="Aquaporin Z"/>
    <property type="match status" value="1"/>
</dbReference>
<dbReference type="Gene3D" id="1.20.1080.10">
    <property type="entry name" value="Glycerol uptake facilitator protein"/>
    <property type="match status" value="1"/>
</dbReference>
<dbReference type="HAMAP" id="MF_01146">
    <property type="entry name" value="Aquaporin_Z"/>
    <property type="match status" value="1"/>
</dbReference>
<dbReference type="InterPro" id="IPR023271">
    <property type="entry name" value="Aquaporin-like"/>
</dbReference>
<dbReference type="InterPro" id="IPR034294">
    <property type="entry name" value="Aquaporin_transptr"/>
</dbReference>
<dbReference type="InterPro" id="IPR023743">
    <property type="entry name" value="Aquaporin_Z"/>
</dbReference>
<dbReference type="InterPro" id="IPR000425">
    <property type="entry name" value="MIP"/>
</dbReference>
<dbReference type="InterPro" id="IPR022357">
    <property type="entry name" value="MIP_CS"/>
</dbReference>
<dbReference type="NCBIfam" id="TIGR00861">
    <property type="entry name" value="MIP"/>
    <property type="match status" value="1"/>
</dbReference>
<dbReference type="NCBIfam" id="NF003838">
    <property type="entry name" value="PRK05420.1"/>
    <property type="match status" value="1"/>
</dbReference>
<dbReference type="PANTHER" id="PTHR45724:SF13">
    <property type="entry name" value="AQUAPORIN NIP1-1-RELATED"/>
    <property type="match status" value="1"/>
</dbReference>
<dbReference type="PANTHER" id="PTHR45724">
    <property type="entry name" value="AQUAPORIN NIP2-1"/>
    <property type="match status" value="1"/>
</dbReference>
<dbReference type="Pfam" id="PF00230">
    <property type="entry name" value="MIP"/>
    <property type="match status" value="1"/>
</dbReference>
<dbReference type="PRINTS" id="PR00783">
    <property type="entry name" value="MINTRINSICP"/>
</dbReference>
<dbReference type="SUPFAM" id="SSF81338">
    <property type="entry name" value="Aquaporin-like"/>
    <property type="match status" value="1"/>
</dbReference>
<dbReference type="PROSITE" id="PS00221">
    <property type="entry name" value="MIP"/>
    <property type="match status" value="1"/>
</dbReference>
<accession>Q7W917</accession>
<gene>
    <name evidence="1" type="primary">aqpZ</name>
    <name type="ordered locus">BPP1958</name>
</gene>
<reference key="1">
    <citation type="journal article" date="2003" name="Nat. Genet.">
        <title>Comparative analysis of the genome sequences of Bordetella pertussis, Bordetella parapertussis and Bordetella bronchiseptica.</title>
        <authorList>
            <person name="Parkhill J."/>
            <person name="Sebaihia M."/>
            <person name="Preston A."/>
            <person name="Murphy L.D."/>
            <person name="Thomson N.R."/>
            <person name="Harris D.E."/>
            <person name="Holden M.T.G."/>
            <person name="Churcher C.M."/>
            <person name="Bentley S.D."/>
            <person name="Mungall K.L."/>
            <person name="Cerdeno-Tarraga A.-M."/>
            <person name="Temple L."/>
            <person name="James K.D."/>
            <person name="Harris B."/>
            <person name="Quail M.A."/>
            <person name="Achtman M."/>
            <person name="Atkin R."/>
            <person name="Baker S."/>
            <person name="Basham D."/>
            <person name="Bason N."/>
            <person name="Cherevach I."/>
            <person name="Chillingworth T."/>
            <person name="Collins M."/>
            <person name="Cronin A."/>
            <person name="Davis P."/>
            <person name="Doggett J."/>
            <person name="Feltwell T."/>
            <person name="Goble A."/>
            <person name="Hamlin N."/>
            <person name="Hauser H."/>
            <person name="Holroyd S."/>
            <person name="Jagels K."/>
            <person name="Leather S."/>
            <person name="Moule S."/>
            <person name="Norberczak H."/>
            <person name="O'Neil S."/>
            <person name="Ormond D."/>
            <person name="Price C."/>
            <person name="Rabbinowitsch E."/>
            <person name="Rutter S."/>
            <person name="Sanders M."/>
            <person name="Saunders D."/>
            <person name="Seeger K."/>
            <person name="Sharp S."/>
            <person name="Simmonds M."/>
            <person name="Skelton J."/>
            <person name="Squares R."/>
            <person name="Squares S."/>
            <person name="Stevens K."/>
            <person name="Unwin L."/>
            <person name="Whitehead S."/>
            <person name="Barrell B.G."/>
            <person name="Maskell D.J."/>
        </authorList>
    </citation>
    <scope>NUCLEOTIDE SEQUENCE [LARGE SCALE GENOMIC DNA]</scope>
    <source>
        <strain>12822 / ATCC BAA-587 / NCTC 13253</strain>
    </source>
</reference>
<evidence type="ECO:0000255" key="1">
    <source>
        <dbReference type="HAMAP-Rule" id="MF_01146"/>
    </source>
</evidence>
<name>AQPZ_BORPA</name>
<sequence>MQPLFKRCGAEFFGTFWLVLGGCGSAVLAAGVPQVGIGYAGVALAFGLTVLTMAYAVGHISGGHFNPAVTVGLAASGRFGWRDVPPYIVAQVVGAIVAAATLASIAQGVAGFDLVASKFAANGYGDHSPGKYSMQAALICEIVLSAGFVFVILGATDKRAPAGFAPIPIGLALTLIHLISIPVTNTSVNPARSTGPALFVGGWALEQLWLFWLAPIAGALVGALAYRLVGTPSAQR</sequence>
<feature type="chain" id="PRO_0000063981" description="Aquaporin Z">
    <location>
        <begin position="1"/>
        <end position="236"/>
    </location>
</feature>
<feature type="transmembrane region" description="Helical" evidence="1">
    <location>
        <begin position="12"/>
        <end position="32"/>
    </location>
</feature>
<feature type="transmembrane region" description="Helical" evidence="1">
    <location>
        <begin position="37"/>
        <end position="57"/>
    </location>
</feature>
<feature type="transmembrane region" description="Helical" evidence="1">
    <location>
        <begin position="92"/>
        <end position="112"/>
    </location>
</feature>
<feature type="transmembrane region" description="Helical" evidence="1">
    <location>
        <begin position="136"/>
        <end position="156"/>
    </location>
</feature>
<feature type="transmembrane region" description="Helical" evidence="1">
    <location>
        <begin position="163"/>
        <end position="183"/>
    </location>
</feature>
<feature type="transmembrane region" description="Helical" evidence="1">
    <location>
        <begin position="197"/>
        <end position="217"/>
    </location>
</feature>
<feature type="short sequence motif" description="NPA 1" evidence="1">
    <location>
        <begin position="66"/>
        <end position="68"/>
    </location>
</feature>
<feature type="short sequence motif" description="NPA 2" evidence="1">
    <location>
        <begin position="189"/>
        <end position="191"/>
    </location>
</feature>
<feature type="site" description="Involved in tetramerization or stability of the tetramer" evidence="1">
    <location>
        <position position="23"/>
    </location>
</feature>
<feature type="site" description="Selectivity filter" evidence="1">
    <location>
        <position position="46"/>
    </location>
</feature>
<feature type="site" description="Selectivity filter" evidence="1">
    <location>
        <position position="177"/>
    </location>
</feature>
<feature type="site" description="Selectivity filter" evidence="1">
    <location>
        <position position="186"/>
    </location>
</feature>
<feature type="site" description="Selectivity filter" evidence="1">
    <location>
        <position position="192"/>
    </location>
</feature>
<comment type="function">
    <text evidence="1">Channel that permits osmotically driven movement of water in both directions. It is involved in the osmoregulation and in the maintenance of cell turgor during volume expansion in rapidly growing cells. It mediates rapid entry or exit of water in response to abrupt changes in osmolarity.</text>
</comment>
<comment type="catalytic activity">
    <reaction evidence="1">
        <text>H2O(in) = H2O(out)</text>
        <dbReference type="Rhea" id="RHEA:29667"/>
        <dbReference type="ChEBI" id="CHEBI:15377"/>
    </reaction>
    <physiologicalReaction direction="left-to-right" evidence="1">
        <dbReference type="Rhea" id="RHEA:29668"/>
    </physiologicalReaction>
    <physiologicalReaction direction="right-to-left" evidence="1">
        <dbReference type="Rhea" id="RHEA:29669"/>
    </physiologicalReaction>
</comment>
<comment type="subunit">
    <text evidence="1">Homotetramer.</text>
</comment>
<comment type="subcellular location">
    <subcellularLocation>
        <location evidence="1">Cell inner membrane</location>
        <topology evidence="1">Multi-pass membrane protein</topology>
    </subcellularLocation>
</comment>
<comment type="domain">
    <text evidence="1">Aquaporins contain two tandem repeats each containing three membrane-spanning domains and a pore-forming loop with the signature motif Asn-Pro-Ala (NPA).</text>
</comment>
<comment type="similarity">
    <text evidence="1">Belongs to the MIP/aquaporin (TC 1.A.8) family.</text>
</comment>